<evidence type="ECO:0000255" key="1">
    <source>
        <dbReference type="HAMAP-Rule" id="MF_00067"/>
    </source>
</evidence>
<feature type="chain" id="PRO_1000092284" description="Phosphoheptose isomerase">
    <location>
        <begin position="1"/>
        <end position="192"/>
    </location>
</feature>
<feature type="domain" description="SIS" evidence="1">
    <location>
        <begin position="37"/>
        <end position="192"/>
    </location>
</feature>
<feature type="binding site" evidence="1">
    <location>
        <begin position="52"/>
        <end position="54"/>
    </location>
    <ligand>
        <name>substrate</name>
    </ligand>
</feature>
<feature type="binding site" evidence="1">
    <location>
        <position position="61"/>
    </location>
    <ligand>
        <name>Zn(2+)</name>
        <dbReference type="ChEBI" id="CHEBI:29105"/>
    </ligand>
</feature>
<feature type="binding site" evidence="1">
    <location>
        <position position="65"/>
    </location>
    <ligand>
        <name>substrate</name>
    </ligand>
</feature>
<feature type="binding site" evidence="1">
    <location>
        <position position="65"/>
    </location>
    <ligand>
        <name>Zn(2+)</name>
        <dbReference type="ChEBI" id="CHEBI:29105"/>
    </ligand>
</feature>
<feature type="binding site" evidence="1">
    <location>
        <begin position="93"/>
        <end position="94"/>
    </location>
    <ligand>
        <name>substrate</name>
    </ligand>
</feature>
<feature type="binding site" evidence="1">
    <location>
        <begin position="119"/>
        <end position="121"/>
    </location>
    <ligand>
        <name>substrate</name>
    </ligand>
</feature>
<feature type="binding site" evidence="1">
    <location>
        <position position="124"/>
    </location>
    <ligand>
        <name>substrate</name>
    </ligand>
</feature>
<feature type="binding site" evidence="1">
    <location>
        <position position="172"/>
    </location>
    <ligand>
        <name>substrate</name>
    </ligand>
</feature>
<feature type="binding site" evidence="1">
    <location>
        <position position="172"/>
    </location>
    <ligand>
        <name>Zn(2+)</name>
        <dbReference type="ChEBI" id="CHEBI:29105"/>
    </ligand>
</feature>
<feature type="binding site" evidence="1">
    <location>
        <position position="180"/>
    </location>
    <ligand>
        <name>Zn(2+)</name>
        <dbReference type="ChEBI" id="CHEBI:29105"/>
    </ligand>
</feature>
<reference key="1">
    <citation type="journal article" date="2008" name="J. Bacteriol.">
        <title>Complete genome sequence of uropathogenic Proteus mirabilis, a master of both adherence and motility.</title>
        <authorList>
            <person name="Pearson M.M."/>
            <person name="Sebaihia M."/>
            <person name="Churcher C."/>
            <person name="Quail M.A."/>
            <person name="Seshasayee A.S."/>
            <person name="Luscombe N.M."/>
            <person name="Abdellah Z."/>
            <person name="Arrosmith C."/>
            <person name="Atkin B."/>
            <person name="Chillingworth T."/>
            <person name="Hauser H."/>
            <person name="Jagels K."/>
            <person name="Moule S."/>
            <person name="Mungall K."/>
            <person name="Norbertczak H."/>
            <person name="Rabbinowitsch E."/>
            <person name="Walker D."/>
            <person name="Whithead S."/>
            <person name="Thomson N.R."/>
            <person name="Rather P.N."/>
            <person name="Parkhill J."/>
            <person name="Mobley H.L.T."/>
        </authorList>
    </citation>
    <scope>NUCLEOTIDE SEQUENCE [LARGE SCALE GENOMIC DNA]</scope>
    <source>
        <strain>HI4320</strain>
    </source>
</reference>
<organism>
    <name type="scientific">Proteus mirabilis (strain HI4320)</name>
    <dbReference type="NCBI Taxonomy" id="529507"/>
    <lineage>
        <taxon>Bacteria</taxon>
        <taxon>Pseudomonadati</taxon>
        <taxon>Pseudomonadota</taxon>
        <taxon>Gammaproteobacteria</taxon>
        <taxon>Enterobacterales</taxon>
        <taxon>Morganellaceae</taxon>
        <taxon>Proteus</taxon>
    </lineage>
</organism>
<comment type="function">
    <text evidence="1">Catalyzes the isomerization of sedoheptulose 7-phosphate in D-glycero-D-manno-heptose 7-phosphate.</text>
</comment>
<comment type="catalytic activity">
    <reaction evidence="1">
        <text>2 D-sedoheptulose 7-phosphate = D-glycero-alpha-D-manno-heptose 7-phosphate + D-glycero-beta-D-manno-heptose 7-phosphate</text>
        <dbReference type="Rhea" id="RHEA:27489"/>
        <dbReference type="ChEBI" id="CHEBI:57483"/>
        <dbReference type="ChEBI" id="CHEBI:60203"/>
        <dbReference type="ChEBI" id="CHEBI:60204"/>
        <dbReference type="EC" id="5.3.1.28"/>
    </reaction>
</comment>
<comment type="cofactor">
    <cofactor evidence="1">
        <name>Zn(2+)</name>
        <dbReference type="ChEBI" id="CHEBI:29105"/>
    </cofactor>
    <text evidence="1">Binds 1 zinc ion per subunit.</text>
</comment>
<comment type="pathway">
    <text evidence="1">Carbohydrate biosynthesis; D-glycero-D-manno-heptose 7-phosphate biosynthesis; D-glycero-alpha-D-manno-heptose 7-phosphate and D-glycero-beta-D-manno-heptose 7-phosphate from sedoheptulose 7-phosphate: step 1/1.</text>
</comment>
<comment type="subunit">
    <text evidence="1">Homotetramer.</text>
</comment>
<comment type="subcellular location">
    <subcellularLocation>
        <location evidence="1">Cytoplasm</location>
    </subcellularLocation>
</comment>
<comment type="miscellaneous">
    <text evidence="1">The reaction produces a racemic mixture of D-glycero-alpha-D-manno-heptose 7-phosphate and D-glycero-beta-D-manno-heptose 7-phosphate.</text>
</comment>
<comment type="similarity">
    <text evidence="1">Belongs to the SIS family. GmhA subfamily.</text>
</comment>
<proteinExistence type="inferred from homology"/>
<keyword id="KW-0119">Carbohydrate metabolism</keyword>
<keyword id="KW-0963">Cytoplasm</keyword>
<keyword id="KW-0413">Isomerase</keyword>
<keyword id="KW-0479">Metal-binding</keyword>
<keyword id="KW-1185">Reference proteome</keyword>
<keyword id="KW-0862">Zinc</keyword>
<name>GMHA_PROMH</name>
<gene>
    <name evidence="1" type="primary">gmhA</name>
    <name type="ordered locus">PMI0349</name>
</gene>
<sequence>MYQDLIRGELTEAADTLSRFLQDDANIEAIQKAAVLLADSFKAGGKVLSCGNGGSHCDAMHFAEELTGRYRENRPGYPAIAISDVSHISCVSNDFGYEYVFSRYVEAVGKEGDVLLGISTSGNSGNIIKAISAAREKGMKVITLTGKDGGKMAGSADIEIRVPHFGYADRIQEIHIKVIHILIQLIEKEMEK</sequence>
<accession>B4EUT1</accession>
<protein>
    <recommendedName>
        <fullName evidence="1">Phosphoheptose isomerase</fullName>
        <ecNumber evidence="1">5.3.1.28</ecNumber>
    </recommendedName>
    <alternativeName>
        <fullName evidence="1">Sedoheptulose 7-phosphate isomerase</fullName>
    </alternativeName>
</protein>
<dbReference type="EC" id="5.3.1.28" evidence="1"/>
<dbReference type="EMBL" id="AM942759">
    <property type="protein sequence ID" value="CAR40905.1"/>
    <property type="molecule type" value="Genomic_DNA"/>
</dbReference>
<dbReference type="SMR" id="B4EUT1"/>
<dbReference type="EnsemblBacteria" id="CAR40905">
    <property type="protein sequence ID" value="CAR40905"/>
    <property type="gene ID" value="PMI0349"/>
</dbReference>
<dbReference type="GeneID" id="6800936"/>
<dbReference type="KEGG" id="pmr:PMI0349"/>
<dbReference type="eggNOG" id="COG0279">
    <property type="taxonomic scope" value="Bacteria"/>
</dbReference>
<dbReference type="HOGENOM" id="CLU_080999_4_0_6"/>
<dbReference type="UniPathway" id="UPA00041">
    <property type="reaction ID" value="UER00436"/>
</dbReference>
<dbReference type="Proteomes" id="UP000008319">
    <property type="component" value="Chromosome"/>
</dbReference>
<dbReference type="GO" id="GO:0005737">
    <property type="term" value="C:cytoplasm"/>
    <property type="evidence" value="ECO:0007669"/>
    <property type="project" value="UniProtKB-SubCell"/>
</dbReference>
<dbReference type="GO" id="GO:0097367">
    <property type="term" value="F:carbohydrate derivative binding"/>
    <property type="evidence" value="ECO:0007669"/>
    <property type="project" value="InterPro"/>
</dbReference>
<dbReference type="GO" id="GO:0008968">
    <property type="term" value="F:D-sedoheptulose 7-phosphate isomerase activity"/>
    <property type="evidence" value="ECO:0007669"/>
    <property type="project" value="UniProtKB-UniRule"/>
</dbReference>
<dbReference type="GO" id="GO:0008270">
    <property type="term" value="F:zinc ion binding"/>
    <property type="evidence" value="ECO:0007669"/>
    <property type="project" value="UniProtKB-UniRule"/>
</dbReference>
<dbReference type="GO" id="GO:0005975">
    <property type="term" value="P:carbohydrate metabolic process"/>
    <property type="evidence" value="ECO:0007669"/>
    <property type="project" value="UniProtKB-UniRule"/>
</dbReference>
<dbReference type="GO" id="GO:2001061">
    <property type="term" value="P:D-glycero-D-manno-heptose 7-phosphate biosynthetic process"/>
    <property type="evidence" value="ECO:0007669"/>
    <property type="project" value="UniProtKB-UniPathway"/>
</dbReference>
<dbReference type="CDD" id="cd05006">
    <property type="entry name" value="SIS_GmhA"/>
    <property type="match status" value="1"/>
</dbReference>
<dbReference type="FunFam" id="3.40.50.10490:FF:000013">
    <property type="entry name" value="Phosphoheptose isomerase"/>
    <property type="match status" value="1"/>
</dbReference>
<dbReference type="Gene3D" id="3.40.50.10490">
    <property type="entry name" value="Glucose-6-phosphate isomerase like protein, domain 1"/>
    <property type="match status" value="1"/>
</dbReference>
<dbReference type="HAMAP" id="MF_00067">
    <property type="entry name" value="GmhA"/>
    <property type="match status" value="1"/>
</dbReference>
<dbReference type="InterPro" id="IPR035461">
    <property type="entry name" value="GmhA/DiaA"/>
</dbReference>
<dbReference type="InterPro" id="IPR004515">
    <property type="entry name" value="Phosphoheptose_Isoase"/>
</dbReference>
<dbReference type="InterPro" id="IPR001347">
    <property type="entry name" value="SIS_dom"/>
</dbReference>
<dbReference type="InterPro" id="IPR046348">
    <property type="entry name" value="SIS_dom_sf"/>
</dbReference>
<dbReference type="InterPro" id="IPR050099">
    <property type="entry name" value="SIS_GmhA/DiaA_subfam"/>
</dbReference>
<dbReference type="NCBIfam" id="TIGR00441">
    <property type="entry name" value="gmhA"/>
    <property type="match status" value="1"/>
</dbReference>
<dbReference type="NCBIfam" id="NF001628">
    <property type="entry name" value="PRK00414.1"/>
    <property type="match status" value="1"/>
</dbReference>
<dbReference type="PANTHER" id="PTHR30390:SF7">
    <property type="entry name" value="PHOSPHOHEPTOSE ISOMERASE"/>
    <property type="match status" value="1"/>
</dbReference>
<dbReference type="PANTHER" id="PTHR30390">
    <property type="entry name" value="SEDOHEPTULOSE 7-PHOSPHATE ISOMERASE / DNAA INITIATOR-ASSOCIATING FACTOR FOR REPLICATION INITIATION"/>
    <property type="match status" value="1"/>
</dbReference>
<dbReference type="Pfam" id="PF13580">
    <property type="entry name" value="SIS_2"/>
    <property type="match status" value="1"/>
</dbReference>
<dbReference type="SUPFAM" id="SSF53697">
    <property type="entry name" value="SIS domain"/>
    <property type="match status" value="1"/>
</dbReference>
<dbReference type="PROSITE" id="PS51464">
    <property type="entry name" value="SIS"/>
    <property type="match status" value="1"/>
</dbReference>